<feature type="chain" id="PRO_1000015926" description="Glutamyl-tRNA(Gln) amidotransferase subunit A">
    <location>
        <begin position="1"/>
        <end position="480"/>
    </location>
</feature>
<feature type="active site" description="Charge relay system" evidence="1">
    <location>
        <position position="74"/>
    </location>
</feature>
<feature type="active site" description="Charge relay system" evidence="1">
    <location>
        <position position="149"/>
    </location>
</feature>
<feature type="active site" description="Acyl-ester intermediate" evidence="1">
    <location>
        <position position="173"/>
    </location>
</feature>
<dbReference type="EC" id="6.3.5.7" evidence="1"/>
<dbReference type="EMBL" id="AP009247">
    <property type="protein sequence ID" value="BAF61451.1"/>
    <property type="molecule type" value="Genomic_DNA"/>
</dbReference>
<dbReference type="RefSeq" id="WP_011929721.1">
    <property type="nucleotide sequence ID" value="NC_009465.1"/>
</dbReference>
<dbReference type="SMR" id="A5CX65"/>
<dbReference type="STRING" id="412965.COSY_0326"/>
<dbReference type="KEGG" id="vok:COSY_0326"/>
<dbReference type="eggNOG" id="COG0154">
    <property type="taxonomic scope" value="Bacteria"/>
</dbReference>
<dbReference type="HOGENOM" id="CLU_009600_0_3_6"/>
<dbReference type="OrthoDB" id="9811471at2"/>
<dbReference type="Proteomes" id="UP000000247">
    <property type="component" value="Chromosome"/>
</dbReference>
<dbReference type="GO" id="GO:0030956">
    <property type="term" value="C:glutamyl-tRNA(Gln) amidotransferase complex"/>
    <property type="evidence" value="ECO:0007669"/>
    <property type="project" value="InterPro"/>
</dbReference>
<dbReference type="GO" id="GO:0005524">
    <property type="term" value="F:ATP binding"/>
    <property type="evidence" value="ECO:0007669"/>
    <property type="project" value="UniProtKB-KW"/>
</dbReference>
<dbReference type="GO" id="GO:0050567">
    <property type="term" value="F:glutaminyl-tRNA synthase (glutamine-hydrolyzing) activity"/>
    <property type="evidence" value="ECO:0007669"/>
    <property type="project" value="UniProtKB-UniRule"/>
</dbReference>
<dbReference type="GO" id="GO:0006412">
    <property type="term" value="P:translation"/>
    <property type="evidence" value="ECO:0007669"/>
    <property type="project" value="UniProtKB-UniRule"/>
</dbReference>
<dbReference type="Gene3D" id="3.90.1300.10">
    <property type="entry name" value="Amidase signature (AS) domain"/>
    <property type="match status" value="1"/>
</dbReference>
<dbReference type="HAMAP" id="MF_00120">
    <property type="entry name" value="GatA"/>
    <property type="match status" value="1"/>
</dbReference>
<dbReference type="InterPro" id="IPR000120">
    <property type="entry name" value="Amidase"/>
</dbReference>
<dbReference type="InterPro" id="IPR020556">
    <property type="entry name" value="Amidase_CS"/>
</dbReference>
<dbReference type="InterPro" id="IPR023631">
    <property type="entry name" value="Amidase_dom"/>
</dbReference>
<dbReference type="InterPro" id="IPR036928">
    <property type="entry name" value="AS_sf"/>
</dbReference>
<dbReference type="InterPro" id="IPR004412">
    <property type="entry name" value="GatA"/>
</dbReference>
<dbReference type="NCBIfam" id="TIGR00132">
    <property type="entry name" value="gatA"/>
    <property type="match status" value="1"/>
</dbReference>
<dbReference type="PANTHER" id="PTHR11895:SF151">
    <property type="entry name" value="GLUTAMYL-TRNA(GLN) AMIDOTRANSFERASE SUBUNIT A"/>
    <property type="match status" value="1"/>
</dbReference>
<dbReference type="PANTHER" id="PTHR11895">
    <property type="entry name" value="TRANSAMIDASE"/>
    <property type="match status" value="1"/>
</dbReference>
<dbReference type="Pfam" id="PF01425">
    <property type="entry name" value="Amidase"/>
    <property type="match status" value="1"/>
</dbReference>
<dbReference type="SUPFAM" id="SSF75304">
    <property type="entry name" value="Amidase signature (AS) enzymes"/>
    <property type="match status" value="1"/>
</dbReference>
<dbReference type="PROSITE" id="PS00571">
    <property type="entry name" value="AMIDASES"/>
    <property type="match status" value="1"/>
</dbReference>
<keyword id="KW-0067">ATP-binding</keyword>
<keyword id="KW-0436">Ligase</keyword>
<keyword id="KW-0547">Nucleotide-binding</keyword>
<keyword id="KW-0648">Protein biosynthesis</keyword>
<keyword id="KW-1185">Reference proteome</keyword>
<accession>A5CX65</accession>
<sequence length="480" mass="52469">MHTKTIVELYKGLKNKDFSCVELTQYYLSRINQSKLNAFITVTDELALVQAQVADDKIALGNASILTGIPYAHKDIFCTKGVKTSAGSKMLDTFIAPYDATVSQKLNQMNLVMLGKTNMDEFAMGSSNENSFYNAVKNPWNYLKIPGGSSGGSAASVAGGLSCFATGTDTGGSIRQPASLCGITGLKPTYGRISRYGIIAYASSFDQAGIMTKTSQDAAIVLNIMAGFDEKDSTSAEQKVPDYTTNLNNSLQGLIIGLPKEFFLSGLDNEVANNIMFAVKEFESMGAIVKEVSLPNSVYAIPTYYIIASCECSSNLSRLDGVRYGYRSKESKNLEDLYLSSRSEGFGEEVKRRIMIGTYALSTGYYDAYYLKAQKVRRLISNDFKKVFEKVDVIMGPVSPTTAFDLGSVKDPVSMYLADIYTLSVNLAGLPGMSIPVGFAQDLPVGLQLIGNYWSESKLLNIAHQFQLQTDWHLRIPQEC</sequence>
<organism>
    <name type="scientific">Vesicomyosocius okutanii subsp. Calyptogena okutanii (strain HA)</name>
    <dbReference type="NCBI Taxonomy" id="412965"/>
    <lineage>
        <taxon>Bacteria</taxon>
        <taxon>Pseudomonadati</taxon>
        <taxon>Pseudomonadota</taxon>
        <taxon>Gammaproteobacteria</taxon>
        <taxon>Candidatus Pseudothioglobaceae</taxon>
        <taxon>Candidatus Vesicomyosocius</taxon>
    </lineage>
</organism>
<reference key="1">
    <citation type="journal article" date="2007" name="Curr. Biol.">
        <title>Reduced genome of the thioautotrophic intracellular symbiont in a deep-sea clam, Calyptogena okutanii.</title>
        <authorList>
            <person name="Kuwahara H."/>
            <person name="Yoshida T."/>
            <person name="Takaki Y."/>
            <person name="Shimamura S."/>
            <person name="Nishi S."/>
            <person name="Harada M."/>
            <person name="Matsuyama K."/>
            <person name="Takishita K."/>
            <person name="Kawato M."/>
            <person name="Uematsu K."/>
            <person name="Fujiwara Y."/>
            <person name="Sato T."/>
            <person name="Kato C."/>
            <person name="Kitagawa M."/>
            <person name="Kato I."/>
            <person name="Maruyama T."/>
        </authorList>
    </citation>
    <scope>NUCLEOTIDE SEQUENCE [LARGE SCALE GENOMIC DNA]</scope>
    <source>
        <strain>HA</strain>
    </source>
</reference>
<gene>
    <name evidence="1" type="primary">gatA</name>
    <name type="ordered locus">COSY_0326</name>
</gene>
<evidence type="ECO:0000255" key="1">
    <source>
        <dbReference type="HAMAP-Rule" id="MF_00120"/>
    </source>
</evidence>
<protein>
    <recommendedName>
        <fullName evidence="1">Glutamyl-tRNA(Gln) amidotransferase subunit A</fullName>
        <shortName evidence="1">Glu-ADT subunit A</shortName>
        <ecNumber evidence="1">6.3.5.7</ecNumber>
    </recommendedName>
</protein>
<proteinExistence type="inferred from homology"/>
<comment type="function">
    <text evidence="1">Allows the formation of correctly charged Gln-tRNA(Gln) through the transamidation of misacylated Glu-tRNA(Gln) in organisms which lack glutaminyl-tRNA synthetase. The reaction takes place in the presence of glutamine and ATP through an activated gamma-phospho-Glu-tRNA(Gln).</text>
</comment>
<comment type="catalytic activity">
    <reaction evidence="1">
        <text>L-glutamyl-tRNA(Gln) + L-glutamine + ATP + H2O = L-glutaminyl-tRNA(Gln) + L-glutamate + ADP + phosphate + H(+)</text>
        <dbReference type="Rhea" id="RHEA:17521"/>
        <dbReference type="Rhea" id="RHEA-COMP:9681"/>
        <dbReference type="Rhea" id="RHEA-COMP:9684"/>
        <dbReference type="ChEBI" id="CHEBI:15377"/>
        <dbReference type="ChEBI" id="CHEBI:15378"/>
        <dbReference type="ChEBI" id="CHEBI:29985"/>
        <dbReference type="ChEBI" id="CHEBI:30616"/>
        <dbReference type="ChEBI" id="CHEBI:43474"/>
        <dbReference type="ChEBI" id="CHEBI:58359"/>
        <dbReference type="ChEBI" id="CHEBI:78520"/>
        <dbReference type="ChEBI" id="CHEBI:78521"/>
        <dbReference type="ChEBI" id="CHEBI:456216"/>
        <dbReference type="EC" id="6.3.5.7"/>
    </reaction>
</comment>
<comment type="subunit">
    <text evidence="1">Heterotrimer of A, B and C subunits.</text>
</comment>
<comment type="similarity">
    <text evidence="1">Belongs to the amidase family. GatA subfamily.</text>
</comment>
<name>GATA_VESOH</name>